<keyword id="KW-0025">Alternative splicing</keyword>
<keyword id="KW-0333">Golgi apparatus</keyword>
<keyword id="KW-0472">Membrane</keyword>
<keyword id="KW-0653">Protein transport</keyword>
<keyword id="KW-1185">Reference proteome</keyword>
<keyword id="KW-0813">Transport</keyword>
<protein>
    <recommendedName>
        <fullName>Conserved oligomeric Golgi complex subunit 4</fullName>
        <shortName>COG complex subunit 4</shortName>
    </recommendedName>
    <alternativeName>
        <fullName>Component of oligomeric Golgi complex 4</fullName>
    </alternativeName>
</protein>
<accession>Q95XZ0</accession>
<accession>Q3V5K1</accession>
<accession>Q95XY9</accession>
<dbReference type="EMBL" id="FO081466">
    <property type="protein sequence ID" value="CCD71790.1"/>
    <property type="molecule type" value="Genomic_DNA"/>
</dbReference>
<dbReference type="EMBL" id="FO081466">
    <property type="protein sequence ID" value="CCD71791.1"/>
    <property type="molecule type" value="Genomic_DNA"/>
</dbReference>
<dbReference type="EMBL" id="FO081466">
    <property type="protein sequence ID" value="CCD71792.1"/>
    <property type="molecule type" value="Genomic_DNA"/>
</dbReference>
<dbReference type="RefSeq" id="NP_001033341.1">
    <molecule id="Q95XZ0-3"/>
    <property type="nucleotide sequence ID" value="NM_001038252.4"/>
</dbReference>
<dbReference type="RefSeq" id="NP_493966.1">
    <molecule id="Q95XZ0-1"/>
    <property type="nucleotide sequence ID" value="NM_061565.7"/>
</dbReference>
<dbReference type="RefSeq" id="NP_493967.1">
    <molecule id="Q95XZ0-2"/>
    <property type="nucleotide sequence ID" value="NM_061566.7"/>
</dbReference>
<dbReference type="SMR" id="Q95XZ0"/>
<dbReference type="BioGRID" id="38893">
    <property type="interactions" value="7"/>
</dbReference>
<dbReference type="FunCoup" id="Q95XZ0">
    <property type="interactions" value="3032"/>
</dbReference>
<dbReference type="IntAct" id="Q95XZ0">
    <property type="interactions" value="4"/>
</dbReference>
<dbReference type="STRING" id="6239.Y51H7C.6a.1"/>
<dbReference type="iPTMnet" id="Q95XZ0"/>
<dbReference type="PaxDb" id="6239-Y51H7C.6a.1"/>
<dbReference type="PeptideAtlas" id="Q95XZ0"/>
<dbReference type="EnsemblMetazoa" id="Y51H7C.6a.1">
    <molecule id="Q95XZ0-1"/>
    <property type="protein sequence ID" value="Y51H7C.6a.1"/>
    <property type="gene ID" value="WBGene00021784"/>
</dbReference>
<dbReference type="EnsemblMetazoa" id="Y51H7C.6b.1">
    <molecule id="Q95XZ0-2"/>
    <property type="protein sequence ID" value="Y51H7C.6b.1"/>
    <property type="gene ID" value="WBGene00021784"/>
</dbReference>
<dbReference type="EnsemblMetazoa" id="Y51H7C.6c.1">
    <molecule id="Q95XZ0-3"/>
    <property type="protein sequence ID" value="Y51H7C.6c.1"/>
    <property type="gene ID" value="WBGene00021784"/>
</dbReference>
<dbReference type="GeneID" id="173518"/>
<dbReference type="KEGG" id="cel:CELE_Y51H7C.6"/>
<dbReference type="UCSC" id="Y51H7C.6a.2">
    <molecule id="Q95XZ0-1"/>
    <property type="organism name" value="c. elegans"/>
</dbReference>
<dbReference type="AGR" id="WB:WBGene00021784"/>
<dbReference type="CTD" id="173518"/>
<dbReference type="WormBase" id="Y51H7C.6a">
    <molecule id="Q95XZ0-1"/>
    <property type="protein sequence ID" value="CE26151"/>
    <property type="gene ID" value="WBGene00021784"/>
    <property type="gene designation" value="cogc-4"/>
</dbReference>
<dbReference type="WormBase" id="Y51H7C.6b">
    <molecule id="Q95XZ0-2"/>
    <property type="protein sequence ID" value="CE26152"/>
    <property type="gene ID" value="WBGene00021784"/>
    <property type="gene designation" value="cogc-4"/>
</dbReference>
<dbReference type="WormBase" id="Y51H7C.6c">
    <molecule id="Q95XZ0-3"/>
    <property type="protein sequence ID" value="CE39055"/>
    <property type="gene ID" value="WBGene00021784"/>
    <property type="gene designation" value="cogc-4"/>
</dbReference>
<dbReference type="eggNOG" id="KOG0412">
    <property type="taxonomic scope" value="Eukaryota"/>
</dbReference>
<dbReference type="GeneTree" id="ENSGT00940000154065"/>
<dbReference type="HOGENOM" id="CLU_014853_2_0_1"/>
<dbReference type="InParanoid" id="Q95XZ0"/>
<dbReference type="OMA" id="RASECQQ"/>
<dbReference type="OrthoDB" id="47059at2759"/>
<dbReference type="PhylomeDB" id="Q95XZ0"/>
<dbReference type="Reactome" id="R-CEL-6807878">
    <property type="pathway name" value="COPI-mediated anterograde transport"/>
</dbReference>
<dbReference type="Reactome" id="R-CEL-6811438">
    <property type="pathway name" value="Intra-Golgi traffic"/>
</dbReference>
<dbReference type="PRO" id="PR:Q95XZ0"/>
<dbReference type="Proteomes" id="UP000001940">
    <property type="component" value="Chromosome II"/>
</dbReference>
<dbReference type="Bgee" id="WBGene00021784">
    <property type="expression patterns" value="Expressed in germ line (C elegans) and 4 other cell types or tissues"/>
</dbReference>
<dbReference type="GO" id="GO:0000139">
    <property type="term" value="C:Golgi membrane"/>
    <property type="evidence" value="ECO:0007669"/>
    <property type="project" value="UniProtKB-SubCell"/>
</dbReference>
<dbReference type="GO" id="GO:0017119">
    <property type="term" value="C:Golgi transport complex"/>
    <property type="evidence" value="ECO:0000318"/>
    <property type="project" value="GO_Central"/>
</dbReference>
<dbReference type="GO" id="GO:0007030">
    <property type="term" value="P:Golgi organization"/>
    <property type="evidence" value="ECO:0000318"/>
    <property type="project" value="GO_Central"/>
</dbReference>
<dbReference type="GO" id="GO:0035262">
    <property type="term" value="P:gonad morphogenesis"/>
    <property type="evidence" value="ECO:0000315"/>
    <property type="project" value="WormBase"/>
</dbReference>
<dbReference type="GO" id="GO:0015031">
    <property type="term" value="P:protein transport"/>
    <property type="evidence" value="ECO:0007669"/>
    <property type="project" value="UniProtKB-KW"/>
</dbReference>
<dbReference type="GO" id="GO:0030334">
    <property type="term" value="P:regulation of cell migration"/>
    <property type="evidence" value="ECO:0000315"/>
    <property type="project" value="WormBase"/>
</dbReference>
<dbReference type="GO" id="GO:0006890">
    <property type="term" value="P:retrograde vesicle-mediated transport, Golgi to endoplasmic reticulum"/>
    <property type="evidence" value="ECO:0000318"/>
    <property type="project" value="GO_Central"/>
</dbReference>
<dbReference type="FunFam" id="1.20.58.1970:FF:000002">
    <property type="entry name" value="Oligomeric Golgi complex subunit"/>
    <property type="match status" value="1"/>
</dbReference>
<dbReference type="Gene3D" id="1.20.58.1970">
    <property type="match status" value="1"/>
</dbReference>
<dbReference type="Gene3D" id="1.10.287.1060">
    <property type="entry name" value="ESAT-6-like"/>
    <property type="match status" value="1"/>
</dbReference>
<dbReference type="InterPro" id="IPR048682">
    <property type="entry name" value="COG4"/>
</dbReference>
<dbReference type="InterPro" id="IPR048684">
    <property type="entry name" value="COG4_C"/>
</dbReference>
<dbReference type="InterPro" id="IPR013167">
    <property type="entry name" value="COG4_M"/>
</dbReference>
<dbReference type="InterPro" id="IPR048680">
    <property type="entry name" value="COG4_N"/>
</dbReference>
<dbReference type="PANTHER" id="PTHR24016">
    <property type="entry name" value="CONSERVED OLIGOMERIC GOLGI COMPLEX SUBUNIT 4"/>
    <property type="match status" value="1"/>
</dbReference>
<dbReference type="PANTHER" id="PTHR24016:SF0">
    <property type="entry name" value="CONSERVED OLIGOMERIC GOLGI COMPLEX SUBUNIT 4"/>
    <property type="match status" value="1"/>
</dbReference>
<dbReference type="Pfam" id="PF20662">
    <property type="entry name" value="COG4_C"/>
    <property type="match status" value="1"/>
</dbReference>
<dbReference type="Pfam" id="PF08318">
    <property type="entry name" value="COG4_m"/>
    <property type="match status" value="1"/>
</dbReference>
<dbReference type="Pfam" id="PF20663">
    <property type="entry name" value="COG4_N"/>
    <property type="match status" value="1"/>
</dbReference>
<dbReference type="SMART" id="SM00762">
    <property type="entry name" value="Cog4"/>
    <property type="match status" value="1"/>
</dbReference>
<reference key="1">
    <citation type="journal article" date="1998" name="Science">
        <title>Genome sequence of the nematode C. elegans: a platform for investigating biology.</title>
        <authorList>
            <consortium name="The C. elegans sequencing consortium"/>
        </authorList>
    </citation>
    <scope>NUCLEOTIDE SEQUENCE [LARGE SCALE GENOMIC DNA]</scope>
    <scope>ALTERNATIVE SPLICING</scope>
    <source>
        <strain>Bristol N2</strain>
    </source>
</reference>
<gene>
    <name type="primary">cogc-4</name>
    <name type="ORF">Y51H7C.6</name>
</gene>
<name>COG4_CAEEL</name>
<comment type="function">
    <text evidence="1">Required for normal Golgi function.</text>
</comment>
<comment type="subunit">
    <text evidence="1">Component of the conserved oligomeric Golgi complex which is composed of eight different subunits and is required for normal Golgi morphology and localization.</text>
</comment>
<comment type="subcellular location">
    <subcellularLocation>
        <location evidence="1">Golgi apparatus membrane</location>
        <topology evidence="1">Peripheral membrane protein</topology>
        <orientation evidence="1">Cytoplasmic side</orientation>
    </subcellularLocation>
</comment>
<comment type="alternative products">
    <event type="alternative splicing"/>
    <isoform>
        <id>Q95XZ0-1</id>
        <name>a</name>
        <sequence type="displayed"/>
    </isoform>
    <isoform>
        <id>Q95XZ0-2</id>
        <name>b</name>
        <sequence type="described" ref="VSP_001129 VSP_001130"/>
    </isoform>
    <isoform>
        <id>Q95XZ0-3</id>
        <name>c</name>
        <sequence type="described" ref="VSP_019284"/>
    </isoform>
</comment>
<comment type="similarity">
    <text evidence="3">Belongs to the COG4 family.</text>
</comment>
<organism>
    <name type="scientific">Caenorhabditis elegans</name>
    <dbReference type="NCBI Taxonomy" id="6239"/>
    <lineage>
        <taxon>Eukaryota</taxon>
        <taxon>Metazoa</taxon>
        <taxon>Ecdysozoa</taxon>
        <taxon>Nematoda</taxon>
        <taxon>Chromadorea</taxon>
        <taxon>Rhabditida</taxon>
        <taxon>Rhabditina</taxon>
        <taxon>Rhabditomorpha</taxon>
        <taxon>Rhabditoidea</taxon>
        <taxon>Rhabditidae</taxon>
        <taxon>Peloderinae</taxon>
        <taxon>Caenorhabditis</taxon>
    </lineage>
</organism>
<feature type="chain" id="PRO_0000213506" description="Conserved oligomeric Golgi complex subunit 4">
    <location>
        <begin position="1"/>
        <end position="801"/>
    </location>
</feature>
<feature type="region of interest" description="Disordered" evidence="2">
    <location>
        <begin position="397"/>
        <end position="427"/>
    </location>
</feature>
<feature type="splice variant" id="VSP_019284" description="In isoform c." evidence="3">
    <location>
        <begin position="264"/>
        <end position="746"/>
    </location>
</feature>
<feature type="splice variant" id="VSP_001129" description="In isoform b." evidence="3">
    <original>SSIVDDVVFIIRKSIRRA</original>
    <variation>RCGDKKYRKRPLKQEKIC</variation>
    <location>
        <begin position="477"/>
        <end position="494"/>
    </location>
</feature>
<feature type="splice variant" id="VSP_001130" description="In isoform b." evidence="3">
    <location>
        <begin position="495"/>
        <end position="801"/>
    </location>
</feature>
<evidence type="ECO:0000250" key="1">
    <source>
        <dbReference type="UniProtKB" id="Q9H9E3"/>
    </source>
</evidence>
<evidence type="ECO:0000256" key="2">
    <source>
        <dbReference type="SAM" id="MobiDB-lite"/>
    </source>
</evidence>
<evidence type="ECO:0000305" key="3"/>
<proteinExistence type="inferred from homology"/>
<sequence>MPEPILHSKFLSGLPAGRKNGVRHGEKPEKVGEKQFDFTRKIRELRLELEIKKREEERIEKDIAIILEENTIDGGEQNRSFGLAVTRLNNHMLVVENSAKQLTSALKNISVLADTISGRVSALDVAKTRVVGCLQLAGDMRDLGVCAEGIDDAIRSEDFETASQHIHRFLTLDQAVFQIREFKQKDATDSIRHSYEVLSSAKERLSKILKSRLTESVQKGDVAEMQRFIKMFPLIHEPDEGLQRYSVFLNQKIDKLAEDNLAIMKAGGTDDNRRNVLYADTLFMFFEGVAEIIESNLPVLEHSYGLEKLLDFMFILQARIDEFFRRLHEEFDTRRRLSHFNRLVDDVIHQKKAAEAVEDAPDPMEIDAIASEICMMNTSAEMYWRFVSRRIGKNEVIRSPSGDGDDEENEEARQERHRLRKEAKEQKMDQLLNRSRVGTKMQELIGNYCLLEHFYMLKSVQKAIKSDVKEDAGGLTSSIVDDVVFIIRKSIRRAAGSGNVDSVCATINNATALIDTVVHGHLRQSIQQGYVTSSNFASEAFTAYQQGKPVKEAADAQKEQFLLALNNSAKLSELLIELQKGLITEWAGVKRPDVEKNKLEHSTTQIEESAKKLASLAKHGVEELFKSAFKNKIKQGADPYQEIDRQMTMQDVEYYEAHDPFMEQFLAQIDRLLVENEPLLFADNYQTLLLLTSSEIARQIEQSLAKCQFNRYGALQLDREYRQICAYLTNVAGWSAREKVGRLGQIVSLLNVETIDEAMEVWHNSKAMTSSATIRTLTLPEVRKVLALRADFPTVAIKSIE</sequence>